<feature type="chain" id="PRO_0000107063" description="Uncharacterized ATP-binding protein MJ0823">
    <location>
        <begin position="1"/>
        <end position="257"/>
    </location>
</feature>
<feature type="binding site" evidence="1">
    <location>
        <begin position="7"/>
        <end position="14"/>
    </location>
    <ligand>
        <name>ATP</name>
        <dbReference type="ChEBI" id="CHEBI:30616"/>
    </ligand>
</feature>
<proteinExistence type="predicted"/>
<name>Y823_METJA</name>
<reference key="1">
    <citation type="journal article" date="1996" name="Science">
        <title>Complete genome sequence of the methanogenic archaeon, Methanococcus jannaschii.</title>
        <authorList>
            <person name="Bult C.J."/>
            <person name="White O."/>
            <person name="Olsen G.J."/>
            <person name="Zhou L."/>
            <person name="Fleischmann R.D."/>
            <person name="Sutton G.G."/>
            <person name="Blake J.A."/>
            <person name="FitzGerald L.M."/>
            <person name="Clayton R.A."/>
            <person name="Gocayne J.D."/>
            <person name="Kerlavage A.R."/>
            <person name="Dougherty B.A."/>
            <person name="Tomb J.-F."/>
            <person name="Adams M.D."/>
            <person name="Reich C.I."/>
            <person name="Overbeek R."/>
            <person name="Kirkness E.F."/>
            <person name="Weinstock K.G."/>
            <person name="Merrick J.M."/>
            <person name="Glodek A."/>
            <person name="Scott J.L."/>
            <person name="Geoghagen N.S.M."/>
            <person name="Weidman J.F."/>
            <person name="Fuhrmann J.L."/>
            <person name="Nguyen D."/>
            <person name="Utterback T.R."/>
            <person name="Kelley J.M."/>
            <person name="Peterson J.D."/>
            <person name="Sadow P.W."/>
            <person name="Hanna M.C."/>
            <person name="Cotton M.D."/>
            <person name="Roberts K.M."/>
            <person name="Hurst M.A."/>
            <person name="Kaine B.P."/>
            <person name="Borodovsky M."/>
            <person name="Klenk H.-P."/>
            <person name="Fraser C.M."/>
            <person name="Smith H.O."/>
            <person name="Woese C.R."/>
            <person name="Venter J.C."/>
        </authorList>
    </citation>
    <scope>NUCLEOTIDE SEQUENCE [LARGE SCALE GENOMIC DNA]</scope>
    <source>
        <strain>ATCC 43067 / DSM 2661 / JAL-1 / JCM 10045 / NBRC 100440</strain>
    </source>
</reference>
<accession>Q58233</accession>
<organism>
    <name type="scientific">Methanocaldococcus jannaschii (strain ATCC 43067 / DSM 2661 / JAL-1 / JCM 10045 / NBRC 100440)</name>
    <name type="common">Methanococcus jannaschii</name>
    <dbReference type="NCBI Taxonomy" id="243232"/>
    <lineage>
        <taxon>Archaea</taxon>
        <taxon>Methanobacteriati</taxon>
        <taxon>Methanobacteriota</taxon>
        <taxon>Methanomada group</taxon>
        <taxon>Methanococci</taxon>
        <taxon>Methanococcales</taxon>
        <taxon>Methanocaldococcaceae</taxon>
        <taxon>Methanocaldococcus</taxon>
    </lineage>
</organism>
<dbReference type="EMBL" id="L77117">
    <property type="protein sequence ID" value="AAB98822.1"/>
    <property type="molecule type" value="Genomic_DNA"/>
</dbReference>
<dbReference type="PIR" id="G64402">
    <property type="entry name" value="G64402"/>
</dbReference>
<dbReference type="RefSeq" id="WP_010870334.1">
    <property type="nucleotide sequence ID" value="NC_000909.1"/>
</dbReference>
<dbReference type="SMR" id="Q58233"/>
<dbReference type="FunCoup" id="Q58233">
    <property type="interactions" value="2"/>
</dbReference>
<dbReference type="STRING" id="243232.MJ_0823"/>
<dbReference type="PaxDb" id="243232-MJ_0823"/>
<dbReference type="EnsemblBacteria" id="AAB98822">
    <property type="protein sequence ID" value="AAB98822"/>
    <property type="gene ID" value="MJ_0823"/>
</dbReference>
<dbReference type="GeneID" id="1451706"/>
<dbReference type="KEGG" id="mja:MJ_0823"/>
<dbReference type="eggNOG" id="arCOG00587">
    <property type="taxonomic scope" value="Archaea"/>
</dbReference>
<dbReference type="HOGENOM" id="CLU_082962_0_0_2"/>
<dbReference type="InParanoid" id="Q58233"/>
<dbReference type="OrthoDB" id="31168at2157"/>
<dbReference type="PhylomeDB" id="Q58233"/>
<dbReference type="Proteomes" id="UP000000805">
    <property type="component" value="Chromosome"/>
</dbReference>
<dbReference type="GO" id="GO:0009898">
    <property type="term" value="C:cytoplasmic side of plasma membrane"/>
    <property type="evidence" value="ECO:0000318"/>
    <property type="project" value="GO_Central"/>
</dbReference>
<dbReference type="GO" id="GO:0005829">
    <property type="term" value="C:cytosol"/>
    <property type="evidence" value="ECO:0000318"/>
    <property type="project" value="GO_Central"/>
</dbReference>
<dbReference type="GO" id="GO:0005524">
    <property type="term" value="F:ATP binding"/>
    <property type="evidence" value="ECO:0000318"/>
    <property type="project" value="GO_Central"/>
</dbReference>
<dbReference type="GO" id="GO:0016887">
    <property type="term" value="F:ATP hydrolysis activity"/>
    <property type="evidence" value="ECO:0000318"/>
    <property type="project" value="GO_Central"/>
</dbReference>
<dbReference type="CDD" id="cd02034">
    <property type="entry name" value="CooC1"/>
    <property type="match status" value="1"/>
</dbReference>
<dbReference type="FunFam" id="3.40.50.300:FF:001573">
    <property type="entry name" value="Carbon monoxide dehydrogenase accessory protein CooC"/>
    <property type="match status" value="1"/>
</dbReference>
<dbReference type="Gene3D" id="3.40.50.300">
    <property type="entry name" value="P-loop containing nucleotide triphosphate hydrolases"/>
    <property type="match status" value="1"/>
</dbReference>
<dbReference type="InterPro" id="IPR002586">
    <property type="entry name" value="CobQ/CobB/MinD/ParA_Nub-bd_dom"/>
</dbReference>
<dbReference type="InterPro" id="IPR014433">
    <property type="entry name" value="CooC"/>
</dbReference>
<dbReference type="InterPro" id="IPR027417">
    <property type="entry name" value="P-loop_NTPase"/>
</dbReference>
<dbReference type="InterPro" id="IPR050625">
    <property type="entry name" value="ParA/MinD_ATPase"/>
</dbReference>
<dbReference type="PANTHER" id="PTHR43384:SF6">
    <property type="entry name" value="SEPTUM SITE-DETERMINING PROTEIN MIND HOMOLOG, CHLOROPLASTIC"/>
    <property type="match status" value="1"/>
</dbReference>
<dbReference type="PANTHER" id="PTHR43384">
    <property type="entry name" value="SEPTUM SITE-DETERMINING PROTEIN MIND HOMOLOG, CHLOROPLASTIC-RELATED"/>
    <property type="match status" value="1"/>
</dbReference>
<dbReference type="Pfam" id="PF01656">
    <property type="entry name" value="CbiA"/>
    <property type="match status" value="1"/>
</dbReference>
<dbReference type="PIRSF" id="PIRSF005647">
    <property type="entry name" value="CooC"/>
    <property type="match status" value="1"/>
</dbReference>
<dbReference type="SUPFAM" id="SSF52540">
    <property type="entry name" value="P-loop containing nucleoside triphosphate hydrolases"/>
    <property type="match status" value="1"/>
</dbReference>
<sequence length="257" mass="28541">MKIAITGKGGVGKTFIASTLMRLFEKNGFKVIGVDCDPNPTLALAFGVEEEIVPLSKRHDIIEERTGAKPGTYGNIFKINPKVDDLIDKVGYKIGNITLLVMGTIEEGGEGCVCPASVLLRRLLRHLILKRDEVVILDMEAGIEHFGRKTIDTVDLMLIVIEPTKKSLITAKRMKKLANDLGIKNLGVIVNKVRNEDKELLKDIIKEELGLEVLGFVPYDEEVIKSEFLGKPINLDSKAAKEIEKIFNYIIKLKNTT</sequence>
<protein>
    <recommendedName>
        <fullName>Uncharacterized ATP-binding protein MJ0823</fullName>
    </recommendedName>
</protein>
<keyword id="KW-0067">ATP-binding</keyword>
<keyword id="KW-0547">Nucleotide-binding</keyword>
<keyword id="KW-1185">Reference proteome</keyword>
<comment type="similarity">
    <text evidence="2">To M.jannaschii MJ0084 and MJ0685.</text>
</comment>
<evidence type="ECO:0000255" key="1"/>
<evidence type="ECO:0000305" key="2"/>
<gene>
    <name type="ordered locus">MJ0823</name>
</gene>